<accession>Q4QP27</accession>
<reference key="1">
    <citation type="journal article" date="2005" name="J. Bacteriol.">
        <title>Genomic sequence of an otitis media isolate of nontypeable Haemophilus influenzae: comparative study with H. influenzae serotype d, strain KW20.</title>
        <authorList>
            <person name="Harrison A."/>
            <person name="Dyer D.W."/>
            <person name="Gillaspy A."/>
            <person name="Ray W.C."/>
            <person name="Mungur R."/>
            <person name="Carson M.B."/>
            <person name="Zhong H."/>
            <person name="Gipson J."/>
            <person name="Gipson M."/>
            <person name="Johnson L.S."/>
            <person name="Lewis L."/>
            <person name="Bakaletz L.O."/>
            <person name="Munson R.S. Jr."/>
        </authorList>
    </citation>
    <scope>NUCLEOTIDE SEQUENCE [LARGE SCALE GENOMIC DNA]</scope>
    <source>
        <strain>86-028NP</strain>
    </source>
</reference>
<name>PSD_HAEI8</name>
<protein>
    <recommendedName>
        <fullName evidence="1">Phosphatidylserine decarboxylase proenzyme</fullName>
        <ecNumber evidence="1">4.1.1.65</ecNumber>
    </recommendedName>
    <component>
        <recommendedName>
            <fullName evidence="1">Phosphatidylserine decarboxylase alpha chain</fullName>
        </recommendedName>
    </component>
    <component>
        <recommendedName>
            <fullName evidence="1">Phosphatidylserine decarboxylase beta chain</fullName>
        </recommendedName>
    </component>
</protein>
<proteinExistence type="inferred from homology"/>
<evidence type="ECO:0000255" key="1">
    <source>
        <dbReference type="HAMAP-Rule" id="MF_00662"/>
    </source>
</evidence>
<comment type="function">
    <text evidence="1">Catalyzes the formation of phosphatidylethanolamine (PtdEtn) from phosphatidylserine (PtdSer).</text>
</comment>
<comment type="catalytic activity">
    <reaction evidence="1">
        <text>a 1,2-diacyl-sn-glycero-3-phospho-L-serine + H(+) = a 1,2-diacyl-sn-glycero-3-phosphoethanolamine + CO2</text>
        <dbReference type="Rhea" id="RHEA:20828"/>
        <dbReference type="ChEBI" id="CHEBI:15378"/>
        <dbReference type="ChEBI" id="CHEBI:16526"/>
        <dbReference type="ChEBI" id="CHEBI:57262"/>
        <dbReference type="ChEBI" id="CHEBI:64612"/>
        <dbReference type="EC" id="4.1.1.65"/>
    </reaction>
</comment>
<comment type="cofactor">
    <cofactor evidence="1">
        <name>pyruvate</name>
        <dbReference type="ChEBI" id="CHEBI:15361"/>
    </cofactor>
    <text evidence="1">Binds 1 pyruvoyl group covalently per subunit.</text>
</comment>
<comment type="pathway">
    <text evidence="1">Phospholipid metabolism; phosphatidylethanolamine biosynthesis; phosphatidylethanolamine from CDP-diacylglycerol: step 2/2.</text>
</comment>
<comment type="subunit">
    <text evidence="1">Heterodimer of a large membrane-associated beta subunit and a small pyruvoyl-containing alpha subunit.</text>
</comment>
<comment type="subcellular location">
    <subcellularLocation>
        <location evidence="1">Cell membrane</location>
        <topology evidence="1">Peripheral membrane protein</topology>
    </subcellularLocation>
</comment>
<comment type="PTM">
    <text evidence="1">Is synthesized initially as an inactive proenzyme. Formation of the active enzyme involves a self-maturation process in which the active site pyruvoyl group is generated from an internal serine residue via an autocatalytic post-translational modification. Two non-identical subunits are generated from the proenzyme in this reaction, and the pyruvate is formed at the N-terminus of the alpha chain, which is derived from the carboxyl end of the proenzyme. The autoendoproteolytic cleavage occurs by a canonical serine protease mechanism, in which the side chain hydroxyl group of the serine supplies its oxygen atom to form the C-terminus of the beta chain, while the remainder of the serine residue undergoes an oxidative deamination to produce ammonia and the pyruvoyl prosthetic group on the alpha chain. During this reaction, the Ser that is part of the protease active site of the proenzyme becomes the pyruvoyl prosthetic group, which constitutes an essential element of the active site of the mature decarboxylase.</text>
</comment>
<comment type="similarity">
    <text evidence="1">Belongs to the phosphatidylserine decarboxylase family. PSD-B subfamily. Prokaryotic type I sub-subfamily.</text>
</comment>
<sequence length="290" mass="33151">MMTSNSYWQRLKVAFQYVMPQIYLTQIAGWFAKQKWGKITHFVIKAFAKKYNIDMSIAQKGQFSDYASFNEFFIRPLKENARPINQNPTALCLPADGRISECGHIDDNLLLQAKGHFFSLEDLLAEDKELVETFKNGEFVTTYLSPRDYHRVHMPCDATLRKMIYVPGDLFSVNPFLAQYVPNLFARNERVICVFDTEFGTMVQILVGATITASIGTTWAGVINPPRHNEVKTWTYEGESAVKLLKGQEMGWFQLGSTVINLFQANQVRLADHLSVNEPVRMGEILAYKK</sequence>
<dbReference type="EC" id="4.1.1.65" evidence="1"/>
<dbReference type="EMBL" id="CP000057">
    <property type="protein sequence ID" value="AAX87220.1"/>
    <property type="molecule type" value="Genomic_DNA"/>
</dbReference>
<dbReference type="SMR" id="Q4QP27"/>
<dbReference type="KEGG" id="hit:NTHI0250"/>
<dbReference type="HOGENOM" id="CLU_029061_4_1_6"/>
<dbReference type="UniPathway" id="UPA00558">
    <property type="reaction ID" value="UER00616"/>
</dbReference>
<dbReference type="Proteomes" id="UP000002525">
    <property type="component" value="Chromosome"/>
</dbReference>
<dbReference type="GO" id="GO:0005886">
    <property type="term" value="C:plasma membrane"/>
    <property type="evidence" value="ECO:0007669"/>
    <property type="project" value="UniProtKB-SubCell"/>
</dbReference>
<dbReference type="GO" id="GO:0004609">
    <property type="term" value="F:phosphatidylserine decarboxylase activity"/>
    <property type="evidence" value="ECO:0007669"/>
    <property type="project" value="UniProtKB-UniRule"/>
</dbReference>
<dbReference type="GO" id="GO:0006646">
    <property type="term" value="P:phosphatidylethanolamine biosynthetic process"/>
    <property type="evidence" value="ECO:0007669"/>
    <property type="project" value="UniProtKB-UniRule"/>
</dbReference>
<dbReference type="HAMAP" id="MF_00662">
    <property type="entry name" value="PS_decarb_PSD_B_type1"/>
    <property type="match status" value="1"/>
</dbReference>
<dbReference type="InterPro" id="IPR003817">
    <property type="entry name" value="PS_Dcarbxylase"/>
</dbReference>
<dbReference type="InterPro" id="IPR033177">
    <property type="entry name" value="PSD-B"/>
</dbReference>
<dbReference type="InterPro" id="IPR033178">
    <property type="entry name" value="PSD_type1_pro"/>
</dbReference>
<dbReference type="NCBIfam" id="TIGR00163">
    <property type="entry name" value="PS_decarb"/>
    <property type="match status" value="1"/>
</dbReference>
<dbReference type="PANTHER" id="PTHR10067">
    <property type="entry name" value="PHOSPHATIDYLSERINE DECARBOXYLASE"/>
    <property type="match status" value="1"/>
</dbReference>
<dbReference type="PANTHER" id="PTHR10067:SF6">
    <property type="entry name" value="PHOSPHATIDYLSERINE DECARBOXYLASE PROENZYME, MITOCHONDRIAL"/>
    <property type="match status" value="1"/>
</dbReference>
<dbReference type="Pfam" id="PF02666">
    <property type="entry name" value="PS_Dcarbxylase"/>
    <property type="match status" value="1"/>
</dbReference>
<organism>
    <name type="scientific">Haemophilus influenzae (strain 86-028NP)</name>
    <dbReference type="NCBI Taxonomy" id="281310"/>
    <lineage>
        <taxon>Bacteria</taxon>
        <taxon>Pseudomonadati</taxon>
        <taxon>Pseudomonadota</taxon>
        <taxon>Gammaproteobacteria</taxon>
        <taxon>Pasteurellales</taxon>
        <taxon>Pasteurellaceae</taxon>
        <taxon>Haemophilus</taxon>
    </lineage>
</organism>
<feature type="chain" id="PRO_0000262115" description="Phosphatidylserine decarboxylase beta chain" evidence="1">
    <location>
        <begin position="1"/>
        <end position="256"/>
    </location>
</feature>
<feature type="chain" id="PRO_0000262116" description="Phosphatidylserine decarboxylase alpha chain" evidence="1">
    <location>
        <begin position="257"/>
        <end position="290"/>
    </location>
</feature>
<feature type="active site" description="Charge relay system; for autoendoproteolytic cleavage activity" evidence="1">
    <location>
        <position position="96"/>
    </location>
</feature>
<feature type="active site" description="Charge relay system; for autoendoproteolytic cleavage activity" evidence="1">
    <location>
        <position position="153"/>
    </location>
</feature>
<feature type="active site" description="Charge relay system; for autoendoproteolytic cleavage activity" evidence="1">
    <location>
        <position position="257"/>
    </location>
</feature>
<feature type="active site" description="Schiff-base intermediate with substrate; via pyruvic acid; for decarboxylase activity" evidence="1">
    <location>
        <position position="257"/>
    </location>
</feature>
<feature type="site" description="Cleavage (non-hydrolytic); by autocatalysis" evidence="1">
    <location>
        <begin position="256"/>
        <end position="257"/>
    </location>
</feature>
<feature type="modified residue" description="Pyruvic acid (Ser); by autocatalysis" evidence="1">
    <location>
        <position position="257"/>
    </location>
</feature>
<keyword id="KW-1003">Cell membrane</keyword>
<keyword id="KW-0210">Decarboxylase</keyword>
<keyword id="KW-0444">Lipid biosynthesis</keyword>
<keyword id="KW-0443">Lipid metabolism</keyword>
<keyword id="KW-0456">Lyase</keyword>
<keyword id="KW-0472">Membrane</keyword>
<keyword id="KW-0594">Phospholipid biosynthesis</keyword>
<keyword id="KW-1208">Phospholipid metabolism</keyword>
<keyword id="KW-0670">Pyruvate</keyword>
<keyword id="KW-0865">Zymogen</keyword>
<gene>
    <name evidence="1" type="primary">psd</name>
    <name type="ordered locus">NTHI0250</name>
</gene>